<protein>
    <recommendedName>
        <fullName>Glutaredoxin-C5</fullName>
    </recommendedName>
    <alternativeName>
        <fullName>Protein ROXY 1</fullName>
    </alternativeName>
</protein>
<gene>
    <name type="primary">GRXC5</name>
    <name type="synonym">ROXY1</name>
    <name type="ordered locus">Os04g0393500</name>
    <name type="ordered locus">LOC_Os04g32300</name>
    <name type="ORF">OSJNBa0072K14.2</name>
</gene>
<name>GRXC5_ORYSJ</name>
<reference key="1">
    <citation type="journal article" date="2009" name="Mol. Plant">
        <title>Conserved functions of Arabidopsis and rice CC-type glutaredoxins in flower development and pathogen response.</title>
        <authorList>
            <person name="Wang Z."/>
            <person name="Xing S."/>
            <person name="Birkenbihl R.P."/>
            <person name="Zachgo S."/>
        </authorList>
    </citation>
    <scope>NUCLEOTIDE SEQUENCE [MRNA]</scope>
</reference>
<reference key="2">
    <citation type="journal article" date="2002" name="Nature">
        <title>Sequence and analysis of rice chromosome 4.</title>
        <authorList>
            <person name="Feng Q."/>
            <person name="Zhang Y."/>
            <person name="Hao P."/>
            <person name="Wang S."/>
            <person name="Fu G."/>
            <person name="Huang Y."/>
            <person name="Li Y."/>
            <person name="Zhu J."/>
            <person name="Liu Y."/>
            <person name="Hu X."/>
            <person name="Jia P."/>
            <person name="Zhang Y."/>
            <person name="Zhao Q."/>
            <person name="Ying K."/>
            <person name="Yu S."/>
            <person name="Tang Y."/>
            <person name="Weng Q."/>
            <person name="Zhang L."/>
            <person name="Lu Y."/>
            <person name="Mu J."/>
            <person name="Lu Y."/>
            <person name="Zhang L.S."/>
            <person name="Yu Z."/>
            <person name="Fan D."/>
            <person name="Liu X."/>
            <person name="Lu T."/>
            <person name="Li C."/>
            <person name="Wu Y."/>
            <person name="Sun T."/>
            <person name="Lei H."/>
            <person name="Li T."/>
            <person name="Hu H."/>
            <person name="Guan J."/>
            <person name="Wu M."/>
            <person name="Zhang R."/>
            <person name="Zhou B."/>
            <person name="Chen Z."/>
            <person name="Chen L."/>
            <person name="Jin Z."/>
            <person name="Wang R."/>
            <person name="Yin H."/>
            <person name="Cai Z."/>
            <person name="Ren S."/>
            <person name="Lv G."/>
            <person name="Gu W."/>
            <person name="Zhu G."/>
            <person name="Tu Y."/>
            <person name="Jia J."/>
            <person name="Zhang Y."/>
            <person name="Chen J."/>
            <person name="Kang H."/>
            <person name="Chen X."/>
            <person name="Shao C."/>
            <person name="Sun Y."/>
            <person name="Hu Q."/>
            <person name="Zhang X."/>
            <person name="Zhang W."/>
            <person name="Wang L."/>
            <person name="Ding C."/>
            <person name="Sheng H."/>
            <person name="Gu J."/>
            <person name="Chen S."/>
            <person name="Ni L."/>
            <person name="Zhu F."/>
            <person name="Chen W."/>
            <person name="Lan L."/>
            <person name="Lai Y."/>
            <person name="Cheng Z."/>
            <person name="Gu M."/>
            <person name="Jiang J."/>
            <person name="Li J."/>
            <person name="Hong G."/>
            <person name="Xue Y."/>
            <person name="Han B."/>
        </authorList>
    </citation>
    <scope>NUCLEOTIDE SEQUENCE [LARGE SCALE GENOMIC DNA]</scope>
    <source>
        <strain>cv. Nipponbare</strain>
    </source>
</reference>
<reference key="3">
    <citation type="journal article" date="2005" name="Nature">
        <title>The map-based sequence of the rice genome.</title>
        <authorList>
            <consortium name="International rice genome sequencing project (IRGSP)"/>
        </authorList>
    </citation>
    <scope>NUCLEOTIDE SEQUENCE [LARGE SCALE GENOMIC DNA]</scope>
    <source>
        <strain>cv. Nipponbare</strain>
    </source>
</reference>
<reference key="4">
    <citation type="journal article" date="2008" name="Nucleic Acids Res.">
        <title>The rice annotation project database (RAP-DB): 2008 update.</title>
        <authorList>
            <consortium name="The rice annotation project (RAP)"/>
        </authorList>
    </citation>
    <scope>GENOME REANNOTATION</scope>
    <source>
        <strain>cv. Nipponbare</strain>
    </source>
</reference>
<reference key="5">
    <citation type="journal article" date="2013" name="Rice">
        <title>Improvement of the Oryza sativa Nipponbare reference genome using next generation sequence and optical map data.</title>
        <authorList>
            <person name="Kawahara Y."/>
            <person name="de la Bastide M."/>
            <person name="Hamilton J.P."/>
            <person name="Kanamori H."/>
            <person name="McCombie W.R."/>
            <person name="Ouyang S."/>
            <person name="Schwartz D.C."/>
            <person name="Tanaka T."/>
            <person name="Wu J."/>
            <person name="Zhou S."/>
            <person name="Childs K.L."/>
            <person name="Davidson R.M."/>
            <person name="Lin H."/>
            <person name="Quesada-Ocampo L."/>
            <person name="Vaillancourt B."/>
            <person name="Sakai H."/>
            <person name="Lee S.S."/>
            <person name="Kim J."/>
            <person name="Numa H."/>
            <person name="Itoh T."/>
            <person name="Buell C.R."/>
            <person name="Matsumoto T."/>
        </authorList>
    </citation>
    <scope>GENOME REANNOTATION</scope>
    <source>
        <strain>cv. Nipponbare</strain>
    </source>
</reference>
<reference key="6">
    <citation type="journal article" date="2006" name="J. Exp. Bot.">
        <title>Genome-wide analysis of plant glutaredoxin systems.</title>
        <authorList>
            <person name="Rouhier N."/>
            <person name="Couturier J."/>
            <person name="Jacquot J.-P."/>
        </authorList>
    </citation>
    <scope>GENE FAMILY</scope>
</reference>
<dbReference type="EMBL" id="FJ463033">
    <property type="protein sequence ID" value="ACL68662.1"/>
    <property type="molecule type" value="mRNA"/>
</dbReference>
<dbReference type="EMBL" id="AL606621">
    <property type="protein sequence ID" value="CAD40555.1"/>
    <property type="molecule type" value="Genomic_DNA"/>
</dbReference>
<dbReference type="EMBL" id="AP008210">
    <property type="protein sequence ID" value="BAF14563.2"/>
    <property type="molecule type" value="Genomic_DNA"/>
</dbReference>
<dbReference type="EMBL" id="AP014960">
    <property type="protein sequence ID" value="BAS88985.1"/>
    <property type="molecule type" value="Genomic_DNA"/>
</dbReference>
<dbReference type="RefSeq" id="XP_015635298.1">
    <property type="nucleotide sequence ID" value="XM_015779812.1"/>
</dbReference>
<dbReference type="SMR" id="Q0JDM4"/>
<dbReference type="FunCoup" id="Q0JDM4">
    <property type="interactions" value="26"/>
</dbReference>
<dbReference type="STRING" id="39947.Q0JDM4"/>
<dbReference type="PaxDb" id="39947-Q0JDM4"/>
<dbReference type="EnsemblPlants" id="Os04t0393500-01">
    <property type="protein sequence ID" value="Os04t0393500-01"/>
    <property type="gene ID" value="Os04g0393500"/>
</dbReference>
<dbReference type="Gramene" id="Os04t0393500-01">
    <property type="protein sequence ID" value="Os04t0393500-01"/>
    <property type="gene ID" value="Os04g0393500"/>
</dbReference>
<dbReference type="KEGG" id="dosa:Os04g0393500"/>
<dbReference type="eggNOG" id="KOG1752">
    <property type="taxonomic scope" value="Eukaryota"/>
</dbReference>
<dbReference type="HOGENOM" id="CLU_026126_6_1_1"/>
<dbReference type="InParanoid" id="Q0JDM4"/>
<dbReference type="OMA" id="SWGYYVP"/>
<dbReference type="OrthoDB" id="418495at2759"/>
<dbReference type="Proteomes" id="UP000000763">
    <property type="component" value="Chromosome 4"/>
</dbReference>
<dbReference type="Proteomes" id="UP000059680">
    <property type="component" value="Chromosome 4"/>
</dbReference>
<dbReference type="GO" id="GO:0005737">
    <property type="term" value="C:cytoplasm"/>
    <property type="evidence" value="ECO:0007669"/>
    <property type="project" value="UniProtKB-SubCell"/>
</dbReference>
<dbReference type="GO" id="GO:0005634">
    <property type="term" value="C:nucleus"/>
    <property type="evidence" value="ECO:0007669"/>
    <property type="project" value="UniProtKB-SubCell"/>
</dbReference>
<dbReference type="FunFam" id="3.40.30.10:FF:000028">
    <property type="entry name" value="Glutaredoxin family protein"/>
    <property type="match status" value="1"/>
</dbReference>
<dbReference type="Gene3D" id="3.40.30.10">
    <property type="entry name" value="Glutaredoxin"/>
    <property type="match status" value="1"/>
</dbReference>
<dbReference type="InterPro" id="IPR011905">
    <property type="entry name" value="GlrX-like_pln_2"/>
</dbReference>
<dbReference type="InterPro" id="IPR002109">
    <property type="entry name" value="Glutaredoxin"/>
</dbReference>
<dbReference type="InterPro" id="IPR036249">
    <property type="entry name" value="Thioredoxin-like_sf"/>
</dbReference>
<dbReference type="NCBIfam" id="TIGR02189">
    <property type="entry name" value="GlrX-like_plant"/>
    <property type="match status" value="1"/>
</dbReference>
<dbReference type="PANTHER" id="PTHR10168">
    <property type="entry name" value="GLUTAREDOXIN"/>
    <property type="match status" value="1"/>
</dbReference>
<dbReference type="Pfam" id="PF00462">
    <property type="entry name" value="Glutaredoxin"/>
    <property type="match status" value="1"/>
</dbReference>
<dbReference type="SUPFAM" id="SSF52833">
    <property type="entry name" value="Thioredoxin-like"/>
    <property type="match status" value="1"/>
</dbReference>
<dbReference type="PROSITE" id="PS51354">
    <property type="entry name" value="GLUTAREDOXIN_2"/>
    <property type="match status" value="1"/>
</dbReference>
<keyword id="KW-0963">Cytoplasm</keyword>
<keyword id="KW-1015">Disulfide bond</keyword>
<keyword id="KW-0249">Electron transport</keyword>
<keyword id="KW-0539">Nucleus</keyword>
<keyword id="KW-0676">Redox-active center</keyword>
<keyword id="KW-1185">Reference proteome</keyword>
<keyword id="KW-0813">Transport</keyword>
<organism>
    <name type="scientific">Oryza sativa subsp. japonica</name>
    <name type="common">Rice</name>
    <dbReference type="NCBI Taxonomy" id="39947"/>
    <lineage>
        <taxon>Eukaryota</taxon>
        <taxon>Viridiplantae</taxon>
        <taxon>Streptophyta</taxon>
        <taxon>Embryophyta</taxon>
        <taxon>Tracheophyta</taxon>
        <taxon>Spermatophyta</taxon>
        <taxon>Magnoliopsida</taxon>
        <taxon>Liliopsida</taxon>
        <taxon>Poales</taxon>
        <taxon>Poaceae</taxon>
        <taxon>BOP clade</taxon>
        <taxon>Oryzoideae</taxon>
        <taxon>Oryzeae</taxon>
        <taxon>Oryzinae</taxon>
        <taxon>Oryza</taxon>
        <taxon>Oryza sativa</taxon>
    </lineage>
</organism>
<comment type="function">
    <text evidence="1">Has a glutathione-disulfide oxidoreductase activity in the presence of NADPH and glutathione reductase. Reduces low molecular weight disulfides and proteins (By similarity).</text>
</comment>
<comment type="subcellular location">
    <subcellularLocation>
        <location evidence="1">Cytoplasm</location>
    </subcellularLocation>
    <subcellularLocation>
        <location evidence="1">Nucleus</location>
    </subcellularLocation>
</comment>
<comment type="similarity">
    <text evidence="3">Belongs to the glutaredoxin family. CC-type subfamily.</text>
</comment>
<proteinExistence type="evidence at transcript level"/>
<sequence length="135" mass="13915">MQYGAAAAEQAWYMPAAAMVVAAAAETAAERVERLASESAVVVFSVSSCCMCHAVKRLFCGMGVHPAVHELDLDPRGRDLERALARLVGAGGAAAAAVPVVFIGGKLVGAMDRVMAAHINGSLVPLLKEAGALWL</sequence>
<feature type="chain" id="PRO_0000269667" description="Glutaredoxin-C5">
    <location>
        <begin position="1"/>
        <end position="135"/>
    </location>
</feature>
<feature type="domain" description="Glutaredoxin" evidence="2">
    <location>
        <begin position="29"/>
        <end position="134"/>
    </location>
</feature>
<feature type="short sequence motif" description="Responsive for interaction with TGA factors" evidence="1">
    <location>
        <begin position="132"/>
        <end position="135"/>
    </location>
</feature>
<feature type="disulfide bond" description="Redox-active" evidence="1">
    <location>
        <begin position="49"/>
        <end position="52"/>
    </location>
</feature>
<accession>Q0JDM4</accession>
<accession>A0A0N7KIZ4</accession>
<accession>B8Y1G7</accession>
<accession>Q7XVL9</accession>
<evidence type="ECO:0000250" key="1"/>
<evidence type="ECO:0000255" key="2">
    <source>
        <dbReference type="PROSITE-ProRule" id="PRU00686"/>
    </source>
</evidence>
<evidence type="ECO:0000305" key="3"/>